<accession>Q4QM89</accession>
<gene>
    <name evidence="1" type="primary">argH</name>
    <name type="ordered locus">NTHI0975</name>
</gene>
<feature type="chain" id="PRO_0000137777" description="Argininosuccinate lyase">
    <location>
        <begin position="1"/>
        <end position="457"/>
    </location>
</feature>
<dbReference type="EC" id="4.3.2.1" evidence="1"/>
<dbReference type="EMBL" id="CP000057">
    <property type="protein sequence ID" value="AAX87858.1"/>
    <property type="molecule type" value="Genomic_DNA"/>
</dbReference>
<dbReference type="RefSeq" id="WP_011272224.1">
    <property type="nucleotide sequence ID" value="NC_007146.2"/>
</dbReference>
<dbReference type="SMR" id="Q4QM89"/>
<dbReference type="GeneID" id="93219852"/>
<dbReference type="KEGG" id="hit:NTHI0975"/>
<dbReference type="HOGENOM" id="CLU_027272_2_3_6"/>
<dbReference type="UniPathway" id="UPA00068">
    <property type="reaction ID" value="UER00114"/>
</dbReference>
<dbReference type="Proteomes" id="UP000002525">
    <property type="component" value="Chromosome"/>
</dbReference>
<dbReference type="GO" id="GO:0005829">
    <property type="term" value="C:cytosol"/>
    <property type="evidence" value="ECO:0007669"/>
    <property type="project" value="TreeGrafter"/>
</dbReference>
<dbReference type="GO" id="GO:0004056">
    <property type="term" value="F:argininosuccinate lyase activity"/>
    <property type="evidence" value="ECO:0007669"/>
    <property type="project" value="UniProtKB-UniRule"/>
</dbReference>
<dbReference type="GO" id="GO:0042450">
    <property type="term" value="P:arginine biosynthetic process via ornithine"/>
    <property type="evidence" value="ECO:0007669"/>
    <property type="project" value="InterPro"/>
</dbReference>
<dbReference type="GO" id="GO:0006526">
    <property type="term" value="P:L-arginine biosynthetic process"/>
    <property type="evidence" value="ECO:0007669"/>
    <property type="project" value="UniProtKB-UniRule"/>
</dbReference>
<dbReference type="CDD" id="cd01359">
    <property type="entry name" value="Argininosuccinate_lyase"/>
    <property type="match status" value="1"/>
</dbReference>
<dbReference type="FunFam" id="1.10.40.30:FF:000001">
    <property type="entry name" value="Argininosuccinate lyase"/>
    <property type="match status" value="1"/>
</dbReference>
<dbReference type="FunFam" id="1.20.200.10:FF:000006">
    <property type="entry name" value="Argininosuccinate lyase"/>
    <property type="match status" value="1"/>
</dbReference>
<dbReference type="Gene3D" id="1.10.40.30">
    <property type="entry name" value="Fumarase/aspartase (C-terminal domain)"/>
    <property type="match status" value="1"/>
</dbReference>
<dbReference type="Gene3D" id="1.20.200.10">
    <property type="entry name" value="Fumarase/aspartase (Central domain)"/>
    <property type="match status" value="1"/>
</dbReference>
<dbReference type="Gene3D" id="1.10.275.10">
    <property type="entry name" value="Fumarase/aspartase (N-terminal domain)"/>
    <property type="match status" value="1"/>
</dbReference>
<dbReference type="HAMAP" id="MF_00006">
    <property type="entry name" value="Arg_succ_lyase"/>
    <property type="match status" value="1"/>
</dbReference>
<dbReference type="InterPro" id="IPR029419">
    <property type="entry name" value="Arg_succ_lyase_C"/>
</dbReference>
<dbReference type="InterPro" id="IPR009049">
    <property type="entry name" value="Argininosuccinate_lyase"/>
</dbReference>
<dbReference type="InterPro" id="IPR024083">
    <property type="entry name" value="Fumarase/histidase_N"/>
</dbReference>
<dbReference type="InterPro" id="IPR020557">
    <property type="entry name" value="Fumarate_lyase_CS"/>
</dbReference>
<dbReference type="InterPro" id="IPR000362">
    <property type="entry name" value="Fumarate_lyase_fam"/>
</dbReference>
<dbReference type="InterPro" id="IPR022761">
    <property type="entry name" value="Fumarate_lyase_N"/>
</dbReference>
<dbReference type="InterPro" id="IPR008948">
    <property type="entry name" value="L-Aspartase-like"/>
</dbReference>
<dbReference type="NCBIfam" id="TIGR00838">
    <property type="entry name" value="argH"/>
    <property type="match status" value="1"/>
</dbReference>
<dbReference type="NCBIfam" id="NF008964">
    <property type="entry name" value="PRK12308.1"/>
    <property type="match status" value="1"/>
</dbReference>
<dbReference type="PANTHER" id="PTHR43814">
    <property type="entry name" value="ARGININOSUCCINATE LYASE"/>
    <property type="match status" value="1"/>
</dbReference>
<dbReference type="PANTHER" id="PTHR43814:SF1">
    <property type="entry name" value="ARGININOSUCCINATE LYASE"/>
    <property type="match status" value="1"/>
</dbReference>
<dbReference type="Pfam" id="PF14698">
    <property type="entry name" value="ASL_C2"/>
    <property type="match status" value="1"/>
</dbReference>
<dbReference type="Pfam" id="PF00206">
    <property type="entry name" value="Lyase_1"/>
    <property type="match status" value="1"/>
</dbReference>
<dbReference type="PRINTS" id="PR00145">
    <property type="entry name" value="ARGSUCLYASE"/>
</dbReference>
<dbReference type="PRINTS" id="PR00149">
    <property type="entry name" value="FUMRATELYASE"/>
</dbReference>
<dbReference type="SUPFAM" id="SSF48557">
    <property type="entry name" value="L-aspartase-like"/>
    <property type="match status" value="1"/>
</dbReference>
<dbReference type="PROSITE" id="PS00163">
    <property type="entry name" value="FUMARATE_LYASES"/>
    <property type="match status" value="1"/>
</dbReference>
<evidence type="ECO:0000255" key="1">
    <source>
        <dbReference type="HAMAP-Rule" id="MF_00006"/>
    </source>
</evidence>
<name>ARLY_HAEI8</name>
<reference key="1">
    <citation type="journal article" date="2005" name="J. Bacteriol.">
        <title>Genomic sequence of an otitis media isolate of nontypeable Haemophilus influenzae: comparative study with H. influenzae serotype d, strain KW20.</title>
        <authorList>
            <person name="Harrison A."/>
            <person name="Dyer D.W."/>
            <person name="Gillaspy A."/>
            <person name="Ray W.C."/>
            <person name="Mungur R."/>
            <person name="Carson M.B."/>
            <person name="Zhong H."/>
            <person name="Gipson J."/>
            <person name="Gipson M."/>
            <person name="Johnson L.S."/>
            <person name="Lewis L."/>
            <person name="Bakaletz L.O."/>
            <person name="Munson R.S. Jr."/>
        </authorList>
    </citation>
    <scope>NUCLEOTIDE SEQUENCE [LARGE SCALE GENOMIC DNA]</scope>
    <source>
        <strain>86-028NP</strain>
    </source>
</reference>
<sequence length="457" mass="51189">MALWGGRFTQAADKRFKDFNDSLRFDYRLAEQDIQGSIGWSKALVKVNVLTVEEQHQLEQALNELLVEVRSNPQAILQDDAEDIHSWVESKLIDKVGNLGKKLHTGRSRNDQVAVDIKLWCKQRVVELQESVRNLQRHLVQTAENTQQAVMPGYTHLQRAQPITFAHWCMAYVEMFDRDYSRLTDAYNRMNTCPLGSGALAGTAYAVDRDSLAHDLSFAFATRNSLDSVSDRDHIVELLSIASLSMAHLSRFAEDMIIFNSGEANFVELSDRVTSGSSLMPQKKNPDACELIRGKTGRVIGSLTSMLITLKGLPLAYNKDMQEDKEGIFDALDTWQNCVDMATFVLDELKVNVERTREAALKGYSNATELADYLVSKGVPFRDSHHIVGETVVYAIEKGKGLEDLTIPEFRQFSEVVGDDVYEILSLQSCLDKRCAKGGVSPLRVAEAIAEAKTRFA</sequence>
<keyword id="KW-0028">Amino-acid biosynthesis</keyword>
<keyword id="KW-0055">Arginine biosynthesis</keyword>
<keyword id="KW-0963">Cytoplasm</keyword>
<keyword id="KW-0456">Lyase</keyword>
<organism>
    <name type="scientific">Haemophilus influenzae (strain 86-028NP)</name>
    <dbReference type="NCBI Taxonomy" id="281310"/>
    <lineage>
        <taxon>Bacteria</taxon>
        <taxon>Pseudomonadati</taxon>
        <taxon>Pseudomonadota</taxon>
        <taxon>Gammaproteobacteria</taxon>
        <taxon>Pasteurellales</taxon>
        <taxon>Pasteurellaceae</taxon>
        <taxon>Haemophilus</taxon>
    </lineage>
</organism>
<proteinExistence type="inferred from homology"/>
<protein>
    <recommendedName>
        <fullName evidence="1">Argininosuccinate lyase</fullName>
        <shortName evidence="1">ASAL</shortName>
        <ecNumber evidence="1">4.3.2.1</ecNumber>
    </recommendedName>
    <alternativeName>
        <fullName evidence="1">Arginosuccinase</fullName>
    </alternativeName>
</protein>
<comment type="catalytic activity">
    <reaction evidence="1">
        <text>2-(N(omega)-L-arginino)succinate = fumarate + L-arginine</text>
        <dbReference type="Rhea" id="RHEA:24020"/>
        <dbReference type="ChEBI" id="CHEBI:29806"/>
        <dbReference type="ChEBI" id="CHEBI:32682"/>
        <dbReference type="ChEBI" id="CHEBI:57472"/>
        <dbReference type="EC" id="4.3.2.1"/>
    </reaction>
</comment>
<comment type="pathway">
    <text evidence="1">Amino-acid biosynthesis; L-arginine biosynthesis; L-arginine from L-ornithine and carbamoyl phosphate: step 3/3.</text>
</comment>
<comment type="subcellular location">
    <subcellularLocation>
        <location evidence="1">Cytoplasm</location>
    </subcellularLocation>
</comment>
<comment type="similarity">
    <text evidence="1">Belongs to the lyase 1 family. Argininosuccinate lyase subfamily.</text>
</comment>